<name>FLIT_ECO27</name>
<sequence length="121" mass="13743">MNNAPHLYFAWQQLVEKSQLMLRLATEEQWDELIASEMAYVNAVQEIAHLTEEVAPSTTMQEQLRPMLHLILDNESKVKQLLQIRMDELAKLVGQSSVQKSVLSAYGDQGGFVLAPQDNLF</sequence>
<reference key="1">
    <citation type="journal article" date="2009" name="J. Bacteriol.">
        <title>Complete genome sequence and comparative genome analysis of enteropathogenic Escherichia coli O127:H6 strain E2348/69.</title>
        <authorList>
            <person name="Iguchi A."/>
            <person name="Thomson N.R."/>
            <person name="Ogura Y."/>
            <person name="Saunders D."/>
            <person name="Ooka T."/>
            <person name="Henderson I.R."/>
            <person name="Harris D."/>
            <person name="Asadulghani M."/>
            <person name="Kurokawa K."/>
            <person name="Dean P."/>
            <person name="Kenny B."/>
            <person name="Quail M.A."/>
            <person name="Thurston S."/>
            <person name="Dougan G."/>
            <person name="Hayashi T."/>
            <person name="Parkhill J."/>
            <person name="Frankel G."/>
        </authorList>
    </citation>
    <scope>NUCLEOTIDE SEQUENCE [LARGE SCALE GENOMIC DNA]</scope>
    <source>
        <strain>E2348/69 / EPEC</strain>
    </source>
</reference>
<proteinExistence type="inferred from homology"/>
<feature type="chain" id="PRO_1000164432" description="Flagellar protein FliT">
    <location>
        <begin position="1"/>
        <end position="121"/>
    </location>
</feature>
<feature type="region of interest" description="Required for homodimerization" evidence="1">
    <location>
        <begin position="1"/>
        <end position="50"/>
    </location>
</feature>
<feature type="region of interest" description="FliD binding" evidence="1">
    <location>
        <begin position="60"/>
        <end position="98"/>
    </location>
</feature>
<dbReference type="EMBL" id="FM180568">
    <property type="protein sequence ID" value="CAS09592.1"/>
    <property type="molecule type" value="Genomic_DNA"/>
</dbReference>
<dbReference type="RefSeq" id="WP_001057836.1">
    <property type="nucleotide sequence ID" value="NC_011601.1"/>
</dbReference>
<dbReference type="SMR" id="B7USU5"/>
<dbReference type="KEGG" id="ecg:E2348C_2044"/>
<dbReference type="HOGENOM" id="CLU_155793_1_1_6"/>
<dbReference type="Proteomes" id="UP000008205">
    <property type="component" value="Chromosome"/>
</dbReference>
<dbReference type="GO" id="GO:0005829">
    <property type="term" value="C:cytosol"/>
    <property type="evidence" value="ECO:0007669"/>
    <property type="project" value="UniProtKB-SubCell"/>
</dbReference>
<dbReference type="GO" id="GO:0044781">
    <property type="term" value="P:bacterial-type flagellum organization"/>
    <property type="evidence" value="ECO:0007669"/>
    <property type="project" value="UniProtKB-KW"/>
</dbReference>
<dbReference type="GO" id="GO:1902209">
    <property type="term" value="P:negative regulation of bacterial-type flagellum assembly"/>
    <property type="evidence" value="ECO:0007669"/>
    <property type="project" value="UniProtKB-UniRule"/>
</dbReference>
<dbReference type="GO" id="GO:0006457">
    <property type="term" value="P:protein folding"/>
    <property type="evidence" value="ECO:0007669"/>
    <property type="project" value="UniProtKB-UniRule"/>
</dbReference>
<dbReference type="FunFam" id="1.20.58.380:FF:000001">
    <property type="entry name" value="Flagellar protein FliT"/>
    <property type="match status" value="1"/>
</dbReference>
<dbReference type="Gene3D" id="1.20.58.380">
    <property type="entry name" value="Flagellar protein flit"/>
    <property type="match status" value="1"/>
</dbReference>
<dbReference type="HAMAP" id="MF_01180">
    <property type="entry name" value="FliT"/>
    <property type="match status" value="1"/>
</dbReference>
<dbReference type="InterPro" id="IPR008622">
    <property type="entry name" value="FliT"/>
</dbReference>
<dbReference type="NCBIfam" id="NF007836">
    <property type="entry name" value="PRK10548.1"/>
    <property type="match status" value="1"/>
</dbReference>
<dbReference type="Pfam" id="PF05400">
    <property type="entry name" value="FliT"/>
    <property type="match status" value="1"/>
</dbReference>
<keyword id="KW-1005">Bacterial flagellum biogenesis</keyword>
<keyword id="KW-0143">Chaperone</keyword>
<keyword id="KW-0963">Cytoplasm</keyword>
<keyword id="KW-1185">Reference proteome</keyword>
<keyword id="KW-0678">Repressor</keyword>
<keyword id="KW-0804">Transcription</keyword>
<keyword id="KW-0805">Transcription regulation</keyword>
<organism>
    <name type="scientific">Escherichia coli O127:H6 (strain E2348/69 / EPEC)</name>
    <dbReference type="NCBI Taxonomy" id="574521"/>
    <lineage>
        <taxon>Bacteria</taxon>
        <taxon>Pseudomonadati</taxon>
        <taxon>Pseudomonadota</taxon>
        <taxon>Gammaproteobacteria</taxon>
        <taxon>Enterobacterales</taxon>
        <taxon>Enterobacteriaceae</taxon>
        <taxon>Escherichia</taxon>
    </lineage>
</organism>
<accession>B7USU5</accession>
<gene>
    <name evidence="1" type="primary">fliT</name>
    <name type="ordered locus">E2348C_2044</name>
</gene>
<evidence type="ECO:0000255" key="1">
    <source>
        <dbReference type="HAMAP-Rule" id="MF_01180"/>
    </source>
</evidence>
<protein>
    <recommendedName>
        <fullName evidence="1">Flagellar protein FliT</fullName>
    </recommendedName>
</protein>
<comment type="function">
    <text evidence="1">Dual-function protein that regulates the transcription of class 2 flagellar operons and that also acts as an export chaperone for the filament-capping protein FliD. As a transcriptional regulator, acts as an anti-FlhDC factor; it directly binds FlhC, thus inhibiting the binding of the FlhC/FlhD complex to class 2 promoters, resulting in decreased expression of class 2 flagellar operons. As a chaperone, effects FliD transition to the membrane by preventing its premature polymerization, and by directing it to the export apparatus.</text>
</comment>
<comment type="subunit">
    <text evidence="1">Homodimer. Interacts with FliD and FlhC.</text>
</comment>
<comment type="subcellular location">
    <subcellularLocation>
        <location evidence="1">Cytoplasm</location>
        <location evidence="1">Cytosol</location>
    </subcellularLocation>
</comment>
<comment type="similarity">
    <text evidence="1">Belongs to the FliT family.</text>
</comment>